<proteinExistence type="evidence at protein level"/>
<evidence type="ECO:0000250" key="1"/>
<evidence type="ECO:0000250" key="2">
    <source>
        <dbReference type="UniProtKB" id="P60208"/>
    </source>
</evidence>
<evidence type="ECO:0000250" key="3">
    <source>
        <dbReference type="UniProtKB" id="P84777"/>
    </source>
</evidence>
<evidence type="ECO:0000269" key="4">
    <source>
    </source>
</evidence>
<evidence type="ECO:0000269" key="5">
    <source>
    </source>
</evidence>
<evidence type="ECO:0000269" key="6">
    <source>
    </source>
</evidence>
<evidence type="ECO:0000269" key="7">
    <source>
    </source>
</evidence>
<evidence type="ECO:0000269" key="8">
    <source>
    </source>
</evidence>
<evidence type="ECO:0000269" key="9">
    <source>
    </source>
</evidence>
<evidence type="ECO:0000303" key="10">
    <source>
    </source>
</evidence>
<evidence type="ECO:0000303" key="11">
    <source>
    </source>
</evidence>
<evidence type="ECO:0000305" key="12"/>
<evidence type="ECO:0000305" key="13">
    <source>
    </source>
</evidence>
<keyword id="KW-0903">Direct protein sequencing</keyword>
<keyword id="KW-1015">Disulfide bond</keyword>
<keyword id="KW-0872">Ion channel impairing toxin</keyword>
<keyword id="KW-0528">Neurotoxin</keyword>
<keyword id="KW-0632">Potassium channel impairing toxin</keyword>
<keyword id="KW-0873">Pyrrolidone carboxylic acid</keyword>
<keyword id="KW-0964">Secreted</keyword>
<keyword id="KW-0732">Signal</keyword>
<keyword id="KW-0800">Toxin</keyword>
<keyword id="KW-1220">Voltage-gated potassium channel impairing toxin</keyword>
<accession>Q8I0L5</accession>
<name>KA152_OLIMR</name>
<comment type="function">
    <text evidence="2 4 5 7 9">Blocks both human ERG1/Kv11.1/KCNH2 potassium channels (in a reversible manner) (PubMed:14599291) and A-type voltage-gated potassium channels Kv4/KCND (in an irreversible manner) (PubMed:11457451, PubMed:12473099, PubMed:12637022). The presence of the Kv4-associated proteins DPP6 or DPP10 is mandatory to have high-affinity blockade of Kv4.2/KCND2 and Kv4.3/KCND3 channels (By similarity). In contrast, the presence of the Kv4-associated protein KChIP1/KCNIP1 does not enhance the affinity blockade (By similarity). May dispose of two functional faces (A and B); the two basic residues (Arg-40 and Lys-41) on the alpha-helix side of the peptide that blocks the hERG current (face A) and the typical dyad through which it blocks A-type currents on the beta-sheet side (face B) (PubMed:14599291). In adult rat brain, it binds to sites in the striatum, hippocampus, superior colliculus, and cerebellum. It shares the same target in rat brain than AaTX1 (AC Q867F4) and AmmTX3 (AC P60208). In DPP6 knockout mice, A-type currents are much less affected by the toxin than in wild-type mice (PubMed:23440961).</text>
</comment>
<comment type="subcellular location">
    <subcellularLocation>
        <location evidence="4">Secreted</location>
    </subcellularLocation>
</comment>
<comment type="tissue specificity">
    <text evidence="12">Expressed by the venom gland.</text>
</comment>
<comment type="domain">
    <text evidence="3">Has the structural arrangement of an alpha-helix connected to a beta-sheet by disulfide bonds (CSalpha/beta).</text>
</comment>
<comment type="mass spectrometry"/>
<comment type="miscellaneous">
    <text evidence="7">Negative results: has no effect on Kv1.1/KCNA1, Kv1.2/KCNA2, Kv1.3/KCNA3, Kv7.1/KCNQ1, Kv7.1/KCNQ1+minK, and on Kir2.1/KCNJ2.</text>
</comment>
<comment type="similarity">
    <text evidence="12">Belongs to the short scorpion toxin superfamily. Potassium channel inhibitor family. Alpha-KTx 15 subfamily.</text>
</comment>
<dbReference type="EMBL" id="AF541980">
    <property type="protein sequence ID" value="AAN34656.1"/>
    <property type="molecule type" value="mRNA"/>
</dbReference>
<dbReference type="EMBL" id="AY156725">
    <property type="protein sequence ID" value="AAN85572.1"/>
    <property type="molecule type" value="Genomic_DNA"/>
</dbReference>
<dbReference type="SMR" id="Q8I0L5"/>
<dbReference type="TCDB" id="8.B.8.1.2">
    <property type="family name" value="the Alpha-ktx15 scorpion toxin (Alpha-ktx15) family"/>
</dbReference>
<dbReference type="GO" id="GO:0005576">
    <property type="term" value="C:extracellular region"/>
    <property type="evidence" value="ECO:0007669"/>
    <property type="project" value="UniProtKB-SubCell"/>
</dbReference>
<dbReference type="GO" id="GO:0008200">
    <property type="term" value="F:ion channel inhibitor activity"/>
    <property type="evidence" value="ECO:0007669"/>
    <property type="project" value="InterPro"/>
</dbReference>
<dbReference type="GO" id="GO:0015459">
    <property type="term" value="F:potassium channel regulator activity"/>
    <property type="evidence" value="ECO:0007669"/>
    <property type="project" value="UniProtKB-KW"/>
</dbReference>
<dbReference type="GO" id="GO:0090729">
    <property type="term" value="F:toxin activity"/>
    <property type="evidence" value="ECO:0007669"/>
    <property type="project" value="UniProtKB-KW"/>
</dbReference>
<dbReference type="Gene3D" id="3.30.30.10">
    <property type="entry name" value="Knottin, scorpion toxin-like"/>
    <property type="match status" value="1"/>
</dbReference>
<dbReference type="InterPro" id="IPR036574">
    <property type="entry name" value="Scorpion_toxin-like_sf"/>
</dbReference>
<dbReference type="InterPro" id="IPR001947">
    <property type="entry name" value="Scorpion_toxinS_K_inh"/>
</dbReference>
<dbReference type="Pfam" id="PF00451">
    <property type="entry name" value="Toxin_2"/>
    <property type="match status" value="1"/>
</dbReference>
<dbReference type="SUPFAM" id="SSF57095">
    <property type="entry name" value="Scorpion toxin-like"/>
    <property type="match status" value="1"/>
</dbReference>
<dbReference type="PROSITE" id="PS01138">
    <property type="entry name" value="SCORP_SHORT_TOXIN"/>
    <property type="match status" value="1"/>
</dbReference>
<reference key="1">
    <citation type="journal article" date="2004" name="Biochem. J.">
        <title>BmTx3, a scorpion toxin with two putative functional faces separately active on A-type K+ and HERG currents.</title>
        <authorList>
            <person name="Huys I."/>
            <person name="Xu C.-Q."/>
            <person name="Wang C.-Z."/>
            <person name="Vacher H."/>
            <person name="Martin-Eauclaire M.-F."/>
            <person name="Chi C.-W."/>
            <person name="Tytgat J."/>
        </authorList>
    </citation>
    <scope>NUCLEOTIDE SEQUENCE [GENOMIC DNA / MRNA]</scope>
    <scope>PROTEIN SEQUENCE OF 23-59</scope>
    <scope>SYNTHESIS OF 23-59</scope>
    <scope>FUNCTION</scope>
    <scope>PYROGLUTAMATE FORMATION AT GLN-23</scope>
    <scope>3D-STRUCTURE MODELING</scope>
    <source>
        <tissue>Venom</tissue>
        <tissue>Venom gland</tissue>
    </source>
</reference>
<reference key="2">
    <citation type="journal article" date="2001" name="FEBS Lett.">
        <title>A new class of scorpion toxin binding sites related to an A-type K+ channel: pharmacological characterization and localization in rat brain.</title>
        <authorList>
            <person name="Vacher H."/>
            <person name="Romi-Lebrun R."/>
            <person name="Mourre C."/>
            <person name="Lebrun B."/>
            <person name="Kourrich S."/>
            <person name="Masmejean F."/>
            <person name="Nakajima T."/>
            <person name="Legros C."/>
            <person name="Crest M."/>
            <person name="Bougis P.E."/>
            <person name="Martin-Eauclaire M.-F."/>
        </authorList>
    </citation>
    <scope>PROTEIN SEQUENCE OF 23-59</scope>
    <scope>SYNTHESIS</scope>
    <scope>FUNCTION</scope>
    <scope>MASS SPECTROMETRY</scope>
    <scope>SUBCELLULAR LOCATION</scope>
    <scope>PYROGLUTAMATE FORMATION AT GLN-23</scope>
    <source>
        <tissue>Venom</tissue>
    </source>
</reference>
<reference key="3">
    <citation type="journal article" date="2002" name="Eur. J. Biochem.">
        <title>Expanding the scorpion toxin alpha-KTX 15 family with AmmTX3 from Androctonus mauretanicus.</title>
        <authorList>
            <person name="Vacher H."/>
            <person name="Alami M."/>
            <person name="Crest M."/>
            <person name="Possani L.D."/>
            <person name="Bougis P.E."/>
            <person name="Martin-Eauclaire M.-F."/>
        </authorList>
    </citation>
    <scope>FUNCTION</scope>
    <scope>MUTAGENESIS OF 58-TYR-PRO-59</scope>
</reference>
<reference key="4">
    <citation type="journal article" date="2006" name="Eur. J. Neurosci.">
        <title>Kv4 channels sensitive to BmTX3 in rat nervous system: autoradiographic analysis of their distribution during brain ontogenesis.</title>
        <authorList>
            <person name="Vacher H."/>
            <person name="Diochot S."/>
            <person name="Bougis P.E."/>
            <person name="Martin-Eauclaire M.F."/>
            <person name="Mourre C."/>
        </authorList>
    </citation>
    <scope>FUNCTION</scope>
</reference>
<reference key="5">
    <citation type="journal article" date="2013" name="J. Physiol. (Lond.)">
        <title>Dipeptidyl-peptidase-like-proteins confer high sensitivity to the scorpion toxin AmmTX3 to Kv4-mediated A-type K+ channels.</title>
        <authorList>
            <person name="Maffie J.K."/>
            <person name="Dvoretskova E."/>
            <person name="Bougis P.E."/>
            <person name="Martin-Eauclaire M.F."/>
            <person name="Rudy B."/>
        </authorList>
    </citation>
    <scope>FUNCTION</scope>
</reference>
<reference key="6">
    <citation type="journal article" date="2003" name="Biochim. Biophys. Acta">
        <title>Functional consequences of deleting the two C-terminal residues of the scorpion toxin BmTX3.</title>
        <authorList>
            <person name="Vacher H."/>
            <person name="Romi-Lebrun R."/>
            <person name="Crest M."/>
            <person name="Masmejean F."/>
            <person name="Bougis P.E."/>
            <person name="Darbon H."/>
            <person name="Martin-Eauclaire M.-F."/>
        </authorList>
    </citation>
    <scope>STRUCTURE BY NMR OF 23-59</scope>
    <scope>DISULFIDE BONDS</scope>
    <scope>MUTAGENESIS OF 58-TYR-PRO-59</scope>
</reference>
<feature type="signal peptide" evidence="4 7">
    <location>
        <begin position="1"/>
        <end position="22"/>
    </location>
</feature>
<feature type="chain" id="PRO_0000035319" description="Potassium channel toxin alpha-KTx 15.2" evidence="4 7">
    <location>
        <begin position="23"/>
        <end position="59"/>
    </location>
</feature>
<feature type="site" description="Hot spot residue in hERG blocking currents" evidence="13">
    <location>
        <position position="28"/>
    </location>
</feature>
<feature type="site" description="Hot spot basic residue in hERG blocking currents" evidence="13">
    <location>
        <position position="40"/>
    </location>
</feature>
<feature type="site" description="Hot spot basic residue in hERG blocking currents" evidence="13">
    <location>
        <position position="41"/>
    </location>
</feature>
<feature type="site" description="Basic residue of the functional dyad" evidence="1">
    <location>
        <position position="49"/>
    </location>
</feature>
<feature type="site" description="Aromatic residue of the functional dyad" evidence="1">
    <location>
        <position position="58"/>
    </location>
</feature>
<feature type="modified residue" description="Pyrrolidone carboxylic acid" evidence="4 7">
    <location>
        <position position="23"/>
    </location>
</feature>
<feature type="disulfide bond" evidence="6">
    <location>
        <begin position="30"/>
        <end position="50"/>
    </location>
</feature>
<feature type="disulfide bond" evidence="6">
    <location>
        <begin position="35"/>
        <end position="55"/>
    </location>
</feature>
<feature type="disulfide bond" evidence="6">
    <location>
        <begin position="39"/>
        <end position="57"/>
    </location>
</feature>
<feature type="mutagenesis site" description="Decrease in blocking of A-type voltage-gated potassium channels, loss of inhibition of Kv4.1/KCND1 and Kv4.3/KCND3." evidence="6 8">
    <location>
        <begin position="58"/>
        <end position="59"/>
    </location>
</feature>
<sequence>MKFSSIILLTLLICSMSKFGNCQVETNVKCQGGSCASVCRKAIGVAAGKCINGRCVCYP</sequence>
<protein>
    <recommendedName>
        <fullName evidence="12">Potassium channel toxin alpha-KTx 15.2</fullName>
    </recommendedName>
    <alternativeName>
        <fullName evidence="10">BmTX3</fullName>
    </alternativeName>
    <alternativeName>
        <fullName evidence="11">BmTX3A</fullName>
    </alternativeName>
</protein>
<organism>
    <name type="scientific">Olivierus martensii</name>
    <name type="common">Manchurian scorpion</name>
    <name type="synonym">Mesobuthus martensii</name>
    <dbReference type="NCBI Taxonomy" id="34649"/>
    <lineage>
        <taxon>Eukaryota</taxon>
        <taxon>Metazoa</taxon>
        <taxon>Ecdysozoa</taxon>
        <taxon>Arthropoda</taxon>
        <taxon>Chelicerata</taxon>
        <taxon>Arachnida</taxon>
        <taxon>Scorpiones</taxon>
        <taxon>Buthida</taxon>
        <taxon>Buthoidea</taxon>
        <taxon>Buthidae</taxon>
        <taxon>Olivierus</taxon>
    </lineage>
</organism>